<proteinExistence type="inferred from homology"/>
<name>HSCB_SERP5</name>
<evidence type="ECO:0000255" key="1">
    <source>
        <dbReference type="HAMAP-Rule" id="MF_00682"/>
    </source>
</evidence>
<sequence>MDYFTLFGLPVRYPVDGSLLASRYQDLQRQFHPDRFASQPERERLMALQQAATINEAYQTLKHPLKRAEYMLSLHGFDLGNEQHTMRDTAFLMEQLELREELDAIERKADAQTQLASFGARVNETVKQRSALMIQQLDSQQWMDAADTVRKLRFLDKLQQQVEQLEEKLLGFE</sequence>
<protein>
    <recommendedName>
        <fullName evidence="1">Co-chaperone protein HscB</fullName>
    </recommendedName>
    <alternativeName>
        <fullName evidence="1">Hsc20</fullName>
    </alternativeName>
</protein>
<gene>
    <name evidence="1" type="primary">hscB</name>
    <name type="ordered locus">Spro_3624</name>
</gene>
<reference key="1">
    <citation type="submission" date="2007-09" db="EMBL/GenBank/DDBJ databases">
        <title>Complete sequence of chromosome of Serratia proteamaculans 568.</title>
        <authorList>
            <consortium name="US DOE Joint Genome Institute"/>
            <person name="Copeland A."/>
            <person name="Lucas S."/>
            <person name="Lapidus A."/>
            <person name="Barry K."/>
            <person name="Glavina del Rio T."/>
            <person name="Dalin E."/>
            <person name="Tice H."/>
            <person name="Pitluck S."/>
            <person name="Chain P."/>
            <person name="Malfatti S."/>
            <person name="Shin M."/>
            <person name="Vergez L."/>
            <person name="Schmutz J."/>
            <person name="Larimer F."/>
            <person name="Land M."/>
            <person name="Hauser L."/>
            <person name="Kyrpides N."/>
            <person name="Kim E."/>
            <person name="Taghavi S."/>
            <person name="Newman L."/>
            <person name="Vangronsveld J."/>
            <person name="van der Lelie D."/>
            <person name="Richardson P."/>
        </authorList>
    </citation>
    <scope>NUCLEOTIDE SEQUENCE [LARGE SCALE GENOMIC DNA]</scope>
    <source>
        <strain>568</strain>
    </source>
</reference>
<accession>A8GHY0</accession>
<organism>
    <name type="scientific">Serratia proteamaculans (strain 568)</name>
    <dbReference type="NCBI Taxonomy" id="399741"/>
    <lineage>
        <taxon>Bacteria</taxon>
        <taxon>Pseudomonadati</taxon>
        <taxon>Pseudomonadota</taxon>
        <taxon>Gammaproteobacteria</taxon>
        <taxon>Enterobacterales</taxon>
        <taxon>Yersiniaceae</taxon>
        <taxon>Serratia</taxon>
    </lineage>
</organism>
<keyword id="KW-0143">Chaperone</keyword>
<dbReference type="EMBL" id="CP000826">
    <property type="protein sequence ID" value="ABV42720.1"/>
    <property type="molecule type" value="Genomic_DNA"/>
</dbReference>
<dbReference type="SMR" id="A8GHY0"/>
<dbReference type="STRING" id="399741.Spro_3624"/>
<dbReference type="KEGG" id="spe:Spro_3624"/>
<dbReference type="eggNOG" id="COG1076">
    <property type="taxonomic scope" value="Bacteria"/>
</dbReference>
<dbReference type="HOGENOM" id="CLU_068529_2_0_6"/>
<dbReference type="OrthoDB" id="287587at2"/>
<dbReference type="GO" id="GO:1990230">
    <property type="term" value="C:iron-sulfur cluster transfer complex"/>
    <property type="evidence" value="ECO:0007669"/>
    <property type="project" value="TreeGrafter"/>
</dbReference>
<dbReference type="GO" id="GO:0001671">
    <property type="term" value="F:ATPase activator activity"/>
    <property type="evidence" value="ECO:0007669"/>
    <property type="project" value="InterPro"/>
</dbReference>
<dbReference type="GO" id="GO:0051087">
    <property type="term" value="F:protein-folding chaperone binding"/>
    <property type="evidence" value="ECO:0007669"/>
    <property type="project" value="InterPro"/>
</dbReference>
<dbReference type="GO" id="GO:0044571">
    <property type="term" value="P:[2Fe-2S] cluster assembly"/>
    <property type="evidence" value="ECO:0007669"/>
    <property type="project" value="InterPro"/>
</dbReference>
<dbReference type="GO" id="GO:0051259">
    <property type="term" value="P:protein complex oligomerization"/>
    <property type="evidence" value="ECO:0007669"/>
    <property type="project" value="InterPro"/>
</dbReference>
<dbReference type="GO" id="GO:0006457">
    <property type="term" value="P:protein folding"/>
    <property type="evidence" value="ECO:0007669"/>
    <property type="project" value="UniProtKB-UniRule"/>
</dbReference>
<dbReference type="CDD" id="cd06257">
    <property type="entry name" value="DnaJ"/>
    <property type="match status" value="1"/>
</dbReference>
<dbReference type="FunFam" id="1.10.287.110:FF:000008">
    <property type="entry name" value="Co-chaperone protein HscB"/>
    <property type="match status" value="1"/>
</dbReference>
<dbReference type="Gene3D" id="1.10.287.110">
    <property type="entry name" value="DnaJ domain"/>
    <property type="match status" value="1"/>
</dbReference>
<dbReference type="Gene3D" id="1.20.1280.20">
    <property type="entry name" value="HscB, C-terminal domain"/>
    <property type="match status" value="1"/>
</dbReference>
<dbReference type="HAMAP" id="MF_00682">
    <property type="entry name" value="HscB"/>
    <property type="match status" value="1"/>
</dbReference>
<dbReference type="InterPro" id="IPR001623">
    <property type="entry name" value="DnaJ_domain"/>
</dbReference>
<dbReference type="InterPro" id="IPR004640">
    <property type="entry name" value="HscB"/>
</dbReference>
<dbReference type="InterPro" id="IPR036386">
    <property type="entry name" value="HscB_C_sf"/>
</dbReference>
<dbReference type="InterPro" id="IPR009073">
    <property type="entry name" value="HscB_oligo_C"/>
</dbReference>
<dbReference type="InterPro" id="IPR036869">
    <property type="entry name" value="J_dom_sf"/>
</dbReference>
<dbReference type="NCBIfam" id="TIGR00714">
    <property type="entry name" value="hscB"/>
    <property type="match status" value="1"/>
</dbReference>
<dbReference type="NCBIfam" id="NF003449">
    <property type="entry name" value="PRK05014.1"/>
    <property type="match status" value="1"/>
</dbReference>
<dbReference type="PANTHER" id="PTHR14021">
    <property type="entry name" value="IRON-SULFUR CLUSTER CO-CHAPERONE PROTEIN HSCB"/>
    <property type="match status" value="1"/>
</dbReference>
<dbReference type="PANTHER" id="PTHR14021:SF15">
    <property type="entry name" value="IRON-SULFUR CLUSTER CO-CHAPERONE PROTEIN HSCB"/>
    <property type="match status" value="1"/>
</dbReference>
<dbReference type="Pfam" id="PF00226">
    <property type="entry name" value="DnaJ"/>
    <property type="match status" value="1"/>
</dbReference>
<dbReference type="Pfam" id="PF07743">
    <property type="entry name" value="HSCB_C"/>
    <property type="match status" value="1"/>
</dbReference>
<dbReference type="SMART" id="SM00271">
    <property type="entry name" value="DnaJ"/>
    <property type="match status" value="1"/>
</dbReference>
<dbReference type="SUPFAM" id="SSF46565">
    <property type="entry name" value="Chaperone J-domain"/>
    <property type="match status" value="1"/>
</dbReference>
<dbReference type="SUPFAM" id="SSF47144">
    <property type="entry name" value="HSC20 (HSCB), C-terminal oligomerisation domain"/>
    <property type="match status" value="1"/>
</dbReference>
<dbReference type="PROSITE" id="PS50076">
    <property type="entry name" value="DNAJ_2"/>
    <property type="match status" value="1"/>
</dbReference>
<feature type="chain" id="PRO_1000083032" description="Co-chaperone protein HscB">
    <location>
        <begin position="1"/>
        <end position="173"/>
    </location>
</feature>
<feature type="domain" description="J" evidence="1">
    <location>
        <begin position="2"/>
        <end position="74"/>
    </location>
</feature>
<comment type="function">
    <text evidence="1">Co-chaperone involved in the maturation of iron-sulfur cluster-containing proteins. Seems to help targeting proteins to be folded toward HscA.</text>
</comment>
<comment type="subunit">
    <text evidence="1">Interacts with HscA and stimulates its ATPase activity. Interacts with IscU.</text>
</comment>
<comment type="similarity">
    <text evidence="1">Belongs to the HscB family.</text>
</comment>